<dbReference type="EC" id="4.2.1.17" evidence="1"/>
<dbReference type="EC" id="5.1.2.3" evidence="1"/>
<dbReference type="EC" id="1.1.1.35" evidence="1"/>
<dbReference type="EMBL" id="AM933173">
    <property type="protein sequence ID" value="CAR38247.1"/>
    <property type="molecule type" value="Genomic_DNA"/>
</dbReference>
<dbReference type="RefSeq" id="WP_000214142.1">
    <property type="nucleotide sequence ID" value="NC_011274.1"/>
</dbReference>
<dbReference type="SMR" id="B5RCL3"/>
<dbReference type="KEGG" id="seg:SG2418"/>
<dbReference type="HOGENOM" id="CLU_009834_16_3_6"/>
<dbReference type="UniPathway" id="UPA00659"/>
<dbReference type="Proteomes" id="UP000008321">
    <property type="component" value="Chromosome"/>
</dbReference>
<dbReference type="GO" id="GO:0005737">
    <property type="term" value="C:cytoplasm"/>
    <property type="evidence" value="ECO:0007669"/>
    <property type="project" value="UniProtKB-SubCell"/>
</dbReference>
<dbReference type="GO" id="GO:0008692">
    <property type="term" value="F:3-hydroxybutyryl-CoA epimerase activity"/>
    <property type="evidence" value="ECO:0007669"/>
    <property type="project" value="UniProtKB-UniRule"/>
</dbReference>
<dbReference type="GO" id="GO:0004300">
    <property type="term" value="F:enoyl-CoA hydratase activity"/>
    <property type="evidence" value="ECO:0007669"/>
    <property type="project" value="UniProtKB-UniRule"/>
</dbReference>
<dbReference type="GO" id="GO:0016509">
    <property type="term" value="F:long-chain-3-hydroxyacyl-CoA dehydrogenase activity"/>
    <property type="evidence" value="ECO:0007669"/>
    <property type="project" value="TreeGrafter"/>
</dbReference>
<dbReference type="GO" id="GO:0070403">
    <property type="term" value="F:NAD+ binding"/>
    <property type="evidence" value="ECO:0007669"/>
    <property type="project" value="InterPro"/>
</dbReference>
<dbReference type="GO" id="GO:0006635">
    <property type="term" value="P:fatty acid beta-oxidation"/>
    <property type="evidence" value="ECO:0007669"/>
    <property type="project" value="UniProtKB-UniRule"/>
</dbReference>
<dbReference type="CDD" id="cd06558">
    <property type="entry name" value="crotonase-like"/>
    <property type="match status" value="1"/>
</dbReference>
<dbReference type="FunFam" id="1.10.1040.50:FF:000003">
    <property type="entry name" value="Fatty acid oxidation complex subunit alpha"/>
    <property type="match status" value="1"/>
</dbReference>
<dbReference type="FunFam" id="3.90.226.10:FF:000011">
    <property type="entry name" value="Fatty acid oxidation complex subunit alpha"/>
    <property type="match status" value="1"/>
</dbReference>
<dbReference type="FunFam" id="3.40.50.720:FF:000009">
    <property type="entry name" value="Fatty oxidation complex, alpha subunit"/>
    <property type="match status" value="1"/>
</dbReference>
<dbReference type="Gene3D" id="1.10.1040.50">
    <property type="match status" value="1"/>
</dbReference>
<dbReference type="Gene3D" id="3.90.226.10">
    <property type="entry name" value="2-enoyl-CoA Hydratase, Chain A, domain 1"/>
    <property type="match status" value="1"/>
</dbReference>
<dbReference type="Gene3D" id="3.40.50.720">
    <property type="entry name" value="NAD(P)-binding Rossmann-like Domain"/>
    <property type="match status" value="1"/>
</dbReference>
<dbReference type="HAMAP" id="MF_01617">
    <property type="entry name" value="FadJ"/>
    <property type="match status" value="1"/>
</dbReference>
<dbReference type="InterPro" id="IPR006180">
    <property type="entry name" value="3-OHacyl-CoA_DH_CS"/>
</dbReference>
<dbReference type="InterPro" id="IPR006176">
    <property type="entry name" value="3-OHacyl-CoA_DH_NAD-bd"/>
</dbReference>
<dbReference type="InterPro" id="IPR006108">
    <property type="entry name" value="3HC_DH_C"/>
</dbReference>
<dbReference type="InterPro" id="IPR008927">
    <property type="entry name" value="6-PGluconate_DH-like_C_sf"/>
</dbReference>
<dbReference type="InterPro" id="IPR029045">
    <property type="entry name" value="ClpP/crotonase-like_dom_sf"/>
</dbReference>
<dbReference type="InterPro" id="IPR001753">
    <property type="entry name" value="Enoyl-CoA_hydra/iso"/>
</dbReference>
<dbReference type="InterPro" id="IPR050136">
    <property type="entry name" value="FA_oxidation_alpha_subunit"/>
</dbReference>
<dbReference type="InterPro" id="IPR012802">
    <property type="entry name" value="FadJ"/>
</dbReference>
<dbReference type="InterPro" id="IPR036291">
    <property type="entry name" value="NAD(P)-bd_dom_sf"/>
</dbReference>
<dbReference type="NCBIfam" id="TIGR02440">
    <property type="entry name" value="FadJ"/>
    <property type="match status" value="1"/>
</dbReference>
<dbReference type="NCBIfam" id="NF008363">
    <property type="entry name" value="PRK11154.1"/>
    <property type="match status" value="1"/>
</dbReference>
<dbReference type="PANTHER" id="PTHR43612">
    <property type="entry name" value="TRIFUNCTIONAL ENZYME SUBUNIT ALPHA"/>
    <property type="match status" value="1"/>
</dbReference>
<dbReference type="PANTHER" id="PTHR43612:SF3">
    <property type="entry name" value="TRIFUNCTIONAL ENZYME SUBUNIT ALPHA, MITOCHONDRIAL"/>
    <property type="match status" value="1"/>
</dbReference>
<dbReference type="Pfam" id="PF00725">
    <property type="entry name" value="3HCDH"/>
    <property type="match status" value="1"/>
</dbReference>
<dbReference type="Pfam" id="PF02737">
    <property type="entry name" value="3HCDH_N"/>
    <property type="match status" value="1"/>
</dbReference>
<dbReference type="Pfam" id="PF00378">
    <property type="entry name" value="ECH_1"/>
    <property type="match status" value="1"/>
</dbReference>
<dbReference type="SUPFAM" id="SSF48179">
    <property type="entry name" value="6-phosphogluconate dehydrogenase C-terminal domain-like"/>
    <property type="match status" value="2"/>
</dbReference>
<dbReference type="SUPFAM" id="SSF52096">
    <property type="entry name" value="ClpP/crotonase"/>
    <property type="match status" value="1"/>
</dbReference>
<dbReference type="SUPFAM" id="SSF51735">
    <property type="entry name" value="NAD(P)-binding Rossmann-fold domains"/>
    <property type="match status" value="1"/>
</dbReference>
<dbReference type="PROSITE" id="PS00067">
    <property type="entry name" value="3HCDH"/>
    <property type="match status" value="1"/>
</dbReference>
<organism>
    <name type="scientific">Salmonella gallinarum (strain 287/91 / NCTC 13346)</name>
    <dbReference type="NCBI Taxonomy" id="550538"/>
    <lineage>
        <taxon>Bacteria</taxon>
        <taxon>Pseudomonadati</taxon>
        <taxon>Pseudomonadota</taxon>
        <taxon>Gammaproteobacteria</taxon>
        <taxon>Enterobacterales</taxon>
        <taxon>Enterobacteriaceae</taxon>
        <taxon>Salmonella</taxon>
    </lineage>
</organism>
<feature type="chain" id="PRO_1000185950" description="Fatty acid oxidation complex subunit alpha">
    <location>
        <begin position="1"/>
        <end position="715"/>
    </location>
</feature>
<feature type="region of interest" description="Enoyl-CoA hydratase" evidence="1">
    <location>
        <begin position="1"/>
        <end position="190"/>
    </location>
</feature>
<feature type="region of interest" description="3-hydroxyacyl-CoA dehydrogenase" evidence="1">
    <location>
        <begin position="306"/>
        <end position="715"/>
    </location>
</feature>
<feature type="site" description="Important for catalytic activity" evidence="1">
    <location>
        <position position="118"/>
    </location>
</feature>
<feature type="site" description="Important for catalytic activity" evidence="1">
    <location>
        <position position="140"/>
    </location>
</feature>
<reference key="1">
    <citation type="journal article" date="2008" name="Genome Res.">
        <title>Comparative genome analysis of Salmonella enteritidis PT4 and Salmonella gallinarum 287/91 provides insights into evolutionary and host adaptation pathways.</title>
        <authorList>
            <person name="Thomson N.R."/>
            <person name="Clayton D.J."/>
            <person name="Windhorst D."/>
            <person name="Vernikos G."/>
            <person name="Davidson S."/>
            <person name="Churcher C."/>
            <person name="Quail M.A."/>
            <person name="Stevens M."/>
            <person name="Jones M.A."/>
            <person name="Watson M."/>
            <person name="Barron A."/>
            <person name="Layton A."/>
            <person name="Pickard D."/>
            <person name="Kingsley R.A."/>
            <person name="Bignell A."/>
            <person name="Clark L."/>
            <person name="Harris B."/>
            <person name="Ormond D."/>
            <person name="Abdellah Z."/>
            <person name="Brooks K."/>
            <person name="Cherevach I."/>
            <person name="Chillingworth T."/>
            <person name="Woodward J."/>
            <person name="Norberczak H."/>
            <person name="Lord A."/>
            <person name="Arrowsmith C."/>
            <person name="Jagels K."/>
            <person name="Moule S."/>
            <person name="Mungall K."/>
            <person name="Saunders M."/>
            <person name="Whitehead S."/>
            <person name="Chabalgoity J.A."/>
            <person name="Maskell D."/>
            <person name="Humphreys T."/>
            <person name="Roberts M."/>
            <person name="Barrow P.A."/>
            <person name="Dougan G."/>
            <person name="Parkhill J."/>
        </authorList>
    </citation>
    <scope>NUCLEOTIDE SEQUENCE [LARGE SCALE GENOMIC DNA]</scope>
    <source>
        <strain>287/91 / NCTC 13346</strain>
    </source>
</reference>
<protein>
    <recommendedName>
        <fullName evidence="1">Fatty acid oxidation complex subunit alpha</fullName>
    </recommendedName>
    <domain>
        <recommendedName>
            <fullName evidence="1">Enoyl-CoA hydratase/3-hydroxybutyryl-CoA epimerase</fullName>
            <ecNumber evidence="1">4.2.1.17</ecNumber>
            <ecNumber evidence="1">5.1.2.3</ecNumber>
        </recommendedName>
    </domain>
    <domain>
        <recommendedName>
            <fullName evidence="1">3-hydroxyacyl-CoA dehydrogenase</fullName>
            <ecNumber evidence="1">1.1.1.35</ecNumber>
        </recommendedName>
    </domain>
</protein>
<sequence>MTTTSAFMLNVRLDNVAVVAIDVPGEKVNTLKAEFAAQVRAILKQIRENKALQGVVFISAKADNFIAGADINMIGHCQNAQEAETLARQGQQLMAEIQALPVPVIAAIHGACLGGGLEMALACHRRICTDDVKTVLGLPEVQLGLLPGSGGTQRLPRLVGVSTALDMILTGKQLRARQALKAGLVDDVVPQTILLEAAVELAKKERLAQRTLPVRERILAGPLGRALLFRLVRKKTAQKTQGNYPATERIIDVIETGLAQGSSSGYDAEARAFGELAMTPQSQALRAVFFASTEVKKDPGSDAPPGPLNSVGILGGGLMGGGIAWVTACKGGLPVRIKDINTQGINHALKYSWDLLETKVRRRHIKANERDKQLALISGSTDYRGFSHRDLVIEAVFEDLPLKQQMVAEVEQNCAAHTIFASNTSSLPIGDIAANAARPEQVIGLHFFSPVEKMPLVEVIPHASTSAQTIATTVKLAKKQGKTPIVVSDKAGFYVNRILAPYINKAIRMLTEGERVEHIDAALVKFGFPVGPIQLLDEVGIDTGTKIIPVLEAAYGERFSAPANVVASILNDDRKGRKNGRGFYLYGEKGRKSKKQVDPAIYKLIGVQGQSRLSAQQVAERCVMLMLNEAARCFDEKVIRSARDGDIGAVFGIGFPPFLGGPFRYMDALGPGEMVATLQRLAALYGPRYAPCEQLVRMAERREHFWTNGETDQGN</sequence>
<accession>B5RCL3</accession>
<evidence type="ECO:0000255" key="1">
    <source>
        <dbReference type="HAMAP-Rule" id="MF_01617"/>
    </source>
</evidence>
<proteinExistence type="inferred from homology"/>
<comment type="function">
    <text evidence="1">Catalyzes the formation of a hydroxyacyl-CoA by addition of water on enoyl-CoA. Also exhibits 3-hydroxyacyl-CoA epimerase and 3-hydroxyacyl-CoA dehydrogenase activities.</text>
</comment>
<comment type="catalytic activity">
    <reaction evidence="1">
        <text>a (3S)-3-hydroxyacyl-CoA = a (2E)-enoyl-CoA + H2O</text>
        <dbReference type="Rhea" id="RHEA:16105"/>
        <dbReference type="ChEBI" id="CHEBI:15377"/>
        <dbReference type="ChEBI" id="CHEBI:57318"/>
        <dbReference type="ChEBI" id="CHEBI:58856"/>
        <dbReference type="EC" id="4.2.1.17"/>
    </reaction>
</comment>
<comment type="catalytic activity">
    <reaction evidence="1">
        <text>a 4-saturated-(3S)-3-hydroxyacyl-CoA = a (3E)-enoyl-CoA + H2O</text>
        <dbReference type="Rhea" id="RHEA:20724"/>
        <dbReference type="ChEBI" id="CHEBI:15377"/>
        <dbReference type="ChEBI" id="CHEBI:58521"/>
        <dbReference type="ChEBI" id="CHEBI:137480"/>
        <dbReference type="EC" id="4.2.1.17"/>
    </reaction>
</comment>
<comment type="catalytic activity">
    <reaction evidence="1">
        <text>a (3S)-3-hydroxyacyl-CoA + NAD(+) = a 3-oxoacyl-CoA + NADH + H(+)</text>
        <dbReference type="Rhea" id="RHEA:22432"/>
        <dbReference type="ChEBI" id="CHEBI:15378"/>
        <dbReference type="ChEBI" id="CHEBI:57318"/>
        <dbReference type="ChEBI" id="CHEBI:57540"/>
        <dbReference type="ChEBI" id="CHEBI:57945"/>
        <dbReference type="ChEBI" id="CHEBI:90726"/>
        <dbReference type="EC" id="1.1.1.35"/>
    </reaction>
</comment>
<comment type="catalytic activity">
    <reaction evidence="1">
        <text>(3S)-3-hydroxybutanoyl-CoA = (3R)-3-hydroxybutanoyl-CoA</text>
        <dbReference type="Rhea" id="RHEA:21760"/>
        <dbReference type="ChEBI" id="CHEBI:57315"/>
        <dbReference type="ChEBI" id="CHEBI:57316"/>
        <dbReference type="EC" id="5.1.2.3"/>
    </reaction>
</comment>
<comment type="pathway">
    <text evidence="1">Lipid metabolism; fatty acid beta-oxidation.</text>
</comment>
<comment type="subunit">
    <text evidence="1">Heterotetramer of two alpha chains (FadJ) and two beta chains (FadI).</text>
</comment>
<comment type="subcellular location">
    <subcellularLocation>
        <location evidence="1">Cytoplasm</location>
    </subcellularLocation>
</comment>
<comment type="similarity">
    <text evidence="1">In the N-terminal section; belongs to the enoyl-CoA hydratase/isomerase family.</text>
</comment>
<comment type="similarity">
    <text evidence="1">In the central section; belongs to the 3-hydroxyacyl-CoA dehydrogenase family.</text>
</comment>
<gene>
    <name evidence="1" type="primary">fadJ</name>
    <name type="ordered locus">SG2418</name>
</gene>
<keyword id="KW-0963">Cytoplasm</keyword>
<keyword id="KW-0276">Fatty acid metabolism</keyword>
<keyword id="KW-0413">Isomerase</keyword>
<keyword id="KW-0442">Lipid degradation</keyword>
<keyword id="KW-0443">Lipid metabolism</keyword>
<keyword id="KW-0456">Lyase</keyword>
<keyword id="KW-0511">Multifunctional enzyme</keyword>
<keyword id="KW-0520">NAD</keyword>
<keyword id="KW-0560">Oxidoreductase</keyword>
<name>FADJ_SALG2</name>